<evidence type="ECO:0000255" key="1">
    <source>
        <dbReference type="HAMAP-Rule" id="MF_00036"/>
    </source>
</evidence>
<accession>B0JI84</accession>
<dbReference type="EC" id="6.1.1.7" evidence="1"/>
<dbReference type="EMBL" id="AP009552">
    <property type="protein sequence ID" value="BAG02382.1"/>
    <property type="molecule type" value="Genomic_DNA"/>
</dbReference>
<dbReference type="RefSeq" id="WP_012265669.1">
    <property type="nucleotide sequence ID" value="NC_010296.1"/>
</dbReference>
<dbReference type="SMR" id="B0JI84"/>
<dbReference type="STRING" id="449447.MAE_25600"/>
<dbReference type="PaxDb" id="449447-MAE_25600"/>
<dbReference type="EnsemblBacteria" id="BAG02382">
    <property type="protein sequence ID" value="BAG02382"/>
    <property type="gene ID" value="MAE_25600"/>
</dbReference>
<dbReference type="KEGG" id="mar:MAE_25600"/>
<dbReference type="PATRIC" id="fig|449447.4.peg.2341"/>
<dbReference type="eggNOG" id="COG0013">
    <property type="taxonomic scope" value="Bacteria"/>
</dbReference>
<dbReference type="HOGENOM" id="CLU_004485_1_1_3"/>
<dbReference type="BioCyc" id="MAER449447:MAE_RS11195-MONOMER"/>
<dbReference type="Proteomes" id="UP000001510">
    <property type="component" value="Chromosome"/>
</dbReference>
<dbReference type="GO" id="GO:0005829">
    <property type="term" value="C:cytosol"/>
    <property type="evidence" value="ECO:0007669"/>
    <property type="project" value="TreeGrafter"/>
</dbReference>
<dbReference type="GO" id="GO:0004813">
    <property type="term" value="F:alanine-tRNA ligase activity"/>
    <property type="evidence" value="ECO:0007669"/>
    <property type="project" value="UniProtKB-UniRule"/>
</dbReference>
<dbReference type="GO" id="GO:0002161">
    <property type="term" value="F:aminoacyl-tRNA deacylase activity"/>
    <property type="evidence" value="ECO:0007669"/>
    <property type="project" value="TreeGrafter"/>
</dbReference>
<dbReference type="GO" id="GO:0005524">
    <property type="term" value="F:ATP binding"/>
    <property type="evidence" value="ECO:0007669"/>
    <property type="project" value="UniProtKB-UniRule"/>
</dbReference>
<dbReference type="GO" id="GO:0000049">
    <property type="term" value="F:tRNA binding"/>
    <property type="evidence" value="ECO:0007669"/>
    <property type="project" value="UniProtKB-KW"/>
</dbReference>
<dbReference type="GO" id="GO:0008270">
    <property type="term" value="F:zinc ion binding"/>
    <property type="evidence" value="ECO:0007669"/>
    <property type="project" value="UniProtKB-UniRule"/>
</dbReference>
<dbReference type="GO" id="GO:0006419">
    <property type="term" value="P:alanyl-tRNA aminoacylation"/>
    <property type="evidence" value="ECO:0007669"/>
    <property type="project" value="UniProtKB-UniRule"/>
</dbReference>
<dbReference type="CDD" id="cd00673">
    <property type="entry name" value="AlaRS_core"/>
    <property type="match status" value="1"/>
</dbReference>
<dbReference type="FunFam" id="3.10.310.40:FF:000001">
    <property type="entry name" value="Alanine--tRNA ligase"/>
    <property type="match status" value="1"/>
</dbReference>
<dbReference type="FunFam" id="3.30.54.20:FF:000001">
    <property type="entry name" value="Alanine--tRNA ligase"/>
    <property type="match status" value="1"/>
</dbReference>
<dbReference type="FunFam" id="3.30.930.10:FF:000004">
    <property type="entry name" value="Alanine--tRNA ligase"/>
    <property type="match status" value="1"/>
</dbReference>
<dbReference type="FunFam" id="3.30.980.10:FF:000004">
    <property type="entry name" value="Alanine--tRNA ligase, cytoplasmic"/>
    <property type="match status" value="1"/>
</dbReference>
<dbReference type="FunFam" id="2.40.30.130:FF:000007">
    <property type="entry name" value="Probable alanine--tRNA ligase, chloroplastic"/>
    <property type="match status" value="1"/>
</dbReference>
<dbReference type="Gene3D" id="2.40.30.130">
    <property type="match status" value="1"/>
</dbReference>
<dbReference type="Gene3D" id="3.10.310.40">
    <property type="match status" value="1"/>
</dbReference>
<dbReference type="Gene3D" id="3.30.54.20">
    <property type="match status" value="1"/>
</dbReference>
<dbReference type="Gene3D" id="6.10.250.550">
    <property type="match status" value="1"/>
</dbReference>
<dbReference type="Gene3D" id="3.30.930.10">
    <property type="entry name" value="Bira Bifunctional Protein, Domain 2"/>
    <property type="match status" value="1"/>
</dbReference>
<dbReference type="Gene3D" id="3.30.980.10">
    <property type="entry name" value="Threonyl-trna Synthetase, Chain A, domain 2"/>
    <property type="match status" value="1"/>
</dbReference>
<dbReference type="HAMAP" id="MF_00036_B">
    <property type="entry name" value="Ala_tRNA_synth_B"/>
    <property type="match status" value="1"/>
</dbReference>
<dbReference type="InterPro" id="IPR045864">
    <property type="entry name" value="aa-tRNA-synth_II/BPL/LPL"/>
</dbReference>
<dbReference type="InterPro" id="IPR002318">
    <property type="entry name" value="Ala-tRNA-lgiase_IIc"/>
</dbReference>
<dbReference type="InterPro" id="IPR018162">
    <property type="entry name" value="Ala-tRNA-ligase_IIc_anticod-bd"/>
</dbReference>
<dbReference type="InterPro" id="IPR018165">
    <property type="entry name" value="Ala-tRNA-synth_IIc_core"/>
</dbReference>
<dbReference type="InterPro" id="IPR018164">
    <property type="entry name" value="Ala-tRNA-synth_IIc_N"/>
</dbReference>
<dbReference type="InterPro" id="IPR050058">
    <property type="entry name" value="Ala-tRNA_ligase"/>
</dbReference>
<dbReference type="InterPro" id="IPR023033">
    <property type="entry name" value="Ala_tRNA_ligase_euk/bac"/>
</dbReference>
<dbReference type="InterPro" id="IPR003156">
    <property type="entry name" value="DHHA1_dom"/>
</dbReference>
<dbReference type="InterPro" id="IPR018163">
    <property type="entry name" value="Thr/Ala-tRNA-synth_IIc_edit"/>
</dbReference>
<dbReference type="InterPro" id="IPR009000">
    <property type="entry name" value="Transl_B-barrel_sf"/>
</dbReference>
<dbReference type="InterPro" id="IPR012947">
    <property type="entry name" value="tRNA_SAD"/>
</dbReference>
<dbReference type="NCBIfam" id="TIGR00344">
    <property type="entry name" value="alaS"/>
    <property type="match status" value="1"/>
</dbReference>
<dbReference type="PANTHER" id="PTHR11777:SF9">
    <property type="entry name" value="ALANINE--TRNA LIGASE, CYTOPLASMIC"/>
    <property type="match status" value="1"/>
</dbReference>
<dbReference type="PANTHER" id="PTHR11777">
    <property type="entry name" value="ALANYL-TRNA SYNTHETASE"/>
    <property type="match status" value="1"/>
</dbReference>
<dbReference type="Pfam" id="PF02272">
    <property type="entry name" value="DHHA1"/>
    <property type="match status" value="1"/>
</dbReference>
<dbReference type="Pfam" id="PF01411">
    <property type="entry name" value="tRNA-synt_2c"/>
    <property type="match status" value="1"/>
</dbReference>
<dbReference type="Pfam" id="PF07973">
    <property type="entry name" value="tRNA_SAD"/>
    <property type="match status" value="1"/>
</dbReference>
<dbReference type="PRINTS" id="PR00980">
    <property type="entry name" value="TRNASYNTHALA"/>
</dbReference>
<dbReference type="SMART" id="SM00863">
    <property type="entry name" value="tRNA_SAD"/>
    <property type="match status" value="1"/>
</dbReference>
<dbReference type="SUPFAM" id="SSF55681">
    <property type="entry name" value="Class II aaRS and biotin synthetases"/>
    <property type="match status" value="1"/>
</dbReference>
<dbReference type="SUPFAM" id="SSF101353">
    <property type="entry name" value="Putative anticodon-binding domain of alanyl-tRNA synthetase (AlaRS)"/>
    <property type="match status" value="1"/>
</dbReference>
<dbReference type="SUPFAM" id="SSF55186">
    <property type="entry name" value="ThrRS/AlaRS common domain"/>
    <property type="match status" value="1"/>
</dbReference>
<dbReference type="SUPFAM" id="SSF50447">
    <property type="entry name" value="Translation proteins"/>
    <property type="match status" value="1"/>
</dbReference>
<dbReference type="PROSITE" id="PS50860">
    <property type="entry name" value="AA_TRNA_LIGASE_II_ALA"/>
    <property type="match status" value="1"/>
</dbReference>
<keyword id="KW-0030">Aminoacyl-tRNA synthetase</keyword>
<keyword id="KW-0067">ATP-binding</keyword>
<keyword id="KW-0963">Cytoplasm</keyword>
<keyword id="KW-0436">Ligase</keyword>
<keyword id="KW-0479">Metal-binding</keyword>
<keyword id="KW-0547">Nucleotide-binding</keyword>
<keyword id="KW-0648">Protein biosynthesis</keyword>
<keyword id="KW-0694">RNA-binding</keyword>
<keyword id="KW-0820">tRNA-binding</keyword>
<keyword id="KW-0862">Zinc</keyword>
<proteinExistence type="inferred from homology"/>
<reference key="1">
    <citation type="journal article" date="2007" name="DNA Res.">
        <title>Complete genomic structure of the bloom-forming toxic cyanobacterium Microcystis aeruginosa NIES-843.</title>
        <authorList>
            <person name="Kaneko T."/>
            <person name="Nakajima N."/>
            <person name="Okamoto S."/>
            <person name="Suzuki I."/>
            <person name="Tanabe Y."/>
            <person name="Tamaoki M."/>
            <person name="Nakamura Y."/>
            <person name="Kasai F."/>
            <person name="Watanabe A."/>
            <person name="Kawashima K."/>
            <person name="Kishida Y."/>
            <person name="Ono A."/>
            <person name="Shimizu Y."/>
            <person name="Takahashi C."/>
            <person name="Minami C."/>
            <person name="Fujishiro T."/>
            <person name="Kohara M."/>
            <person name="Katoh M."/>
            <person name="Nakazaki N."/>
            <person name="Nakayama S."/>
            <person name="Yamada M."/>
            <person name="Tabata S."/>
            <person name="Watanabe M.M."/>
        </authorList>
    </citation>
    <scope>NUCLEOTIDE SEQUENCE [LARGE SCALE GENOMIC DNA]</scope>
    <source>
        <strain>NIES-843 / IAM M-247</strain>
    </source>
</reference>
<gene>
    <name evidence="1" type="primary">alaS</name>
    <name type="ordered locus">MAE_25600</name>
</gene>
<name>SYA_MICAN</name>
<comment type="function">
    <text evidence="1">Catalyzes the attachment of alanine to tRNA(Ala) in a two-step reaction: alanine is first activated by ATP to form Ala-AMP and then transferred to the acceptor end of tRNA(Ala). Also edits incorrectly charged Ser-tRNA(Ala) and Gly-tRNA(Ala) via its editing domain.</text>
</comment>
<comment type="catalytic activity">
    <reaction evidence="1">
        <text>tRNA(Ala) + L-alanine + ATP = L-alanyl-tRNA(Ala) + AMP + diphosphate</text>
        <dbReference type="Rhea" id="RHEA:12540"/>
        <dbReference type="Rhea" id="RHEA-COMP:9657"/>
        <dbReference type="Rhea" id="RHEA-COMP:9923"/>
        <dbReference type="ChEBI" id="CHEBI:30616"/>
        <dbReference type="ChEBI" id="CHEBI:33019"/>
        <dbReference type="ChEBI" id="CHEBI:57972"/>
        <dbReference type="ChEBI" id="CHEBI:78442"/>
        <dbReference type="ChEBI" id="CHEBI:78497"/>
        <dbReference type="ChEBI" id="CHEBI:456215"/>
        <dbReference type="EC" id="6.1.1.7"/>
    </reaction>
</comment>
<comment type="cofactor">
    <cofactor evidence="1">
        <name>Zn(2+)</name>
        <dbReference type="ChEBI" id="CHEBI:29105"/>
    </cofactor>
    <text evidence="1">Binds 1 zinc ion per subunit.</text>
</comment>
<comment type="subcellular location">
    <subcellularLocation>
        <location evidence="1">Cytoplasm</location>
    </subcellularLocation>
</comment>
<comment type="domain">
    <text evidence="1">Consists of three domains; the N-terminal catalytic domain, the editing domain and the C-terminal C-Ala domain. The editing domain removes incorrectly charged amino acids, while the C-Ala domain, along with tRNA(Ala), serves as a bridge to cooperatively bring together the editing and aminoacylation centers thus stimulating deacylation of misacylated tRNAs.</text>
</comment>
<comment type="similarity">
    <text evidence="1">Belongs to the class-II aminoacyl-tRNA synthetase family.</text>
</comment>
<feature type="chain" id="PRO_0000347677" description="Alanine--tRNA ligase">
    <location>
        <begin position="1"/>
        <end position="874"/>
    </location>
</feature>
<feature type="binding site" evidence="1">
    <location>
        <position position="559"/>
    </location>
    <ligand>
        <name>Zn(2+)</name>
        <dbReference type="ChEBI" id="CHEBI:29105"/>
    </ligand>
</feature>
<feature type="binding site" evidence="1">
    <location>
        <position position="563"/>
    </location>
    <ligand>
        <name>Zn(2+)</name>
        <dbReference type="ChEBI" id="CHEBI:29105"/>
    </ligand>
</feature>
<feature type="binding site" evidence="1">
    <location>
        <position position="661"/>
    </location>
    <ligand>
        <name>Zn(2+)</name>
        <dbReference type="ChEBI" id="CHEBI:29105"/>
    </ligand>
</feature>
<feature type="binding site" evidence="1">
    <location>
        <position position="665"/>
    </location>
    <ligand>
        <name>Zn(2+)</name>
        <dbReference type="ChEBI" id="CHEBI:29105"/>
    </ligand>
</feature>
<protein>
    <recommendedName>
        <fullName evidence="1">Alanine--tRNA ligase</fullName>
        <ecNumber evidence="1">6.1.1.7</ecNumber>
    </recommendedName>
    <alternativeName>
        <fullName evidence="1">Alanyl-tRNA synthetase</fullName>
        <shortName evidence="1">AlaRS</shortName>
    </alternativeName>
</protein>
<organism>
    <name type="scientific">Microcystis aeruginosa (strain NIES-843 / IAM M-2473)</name>
    <dbReference type="NCBI Taxonomy" id="449447"/>
    <lineage>
        <taxon>Bacteria</taxon>
        <taxon>Bacillati</taxon>
        <taxon>Cyanobacteriota</taxon>
        <taxon>Cyanophyceae</taxon>
        <taxon>Oscillatoriophycideae</taxon>
        <taxon>Chroococcales</taxon>
        <taxon>Microcystaceae</taxon>
        <taxon>Microcystis</taxon>
    </lineage>
</organism>
<sequence>MSNHLSGSEIRQRFLDFFAARNHKILPSASLVPEDPTVLLTIAGMLPFKPIFLGQKTPEFPRATTSQKCIRTNDIENVGRTARHHTFFEMLGNFSFGDYFKEQAIAWAWELSTEVFNLPPERLVVSVFKEDEEAFAIWRDKIGIPAHRIQKMGEEDNFWVSGPTGPCGPCSEIYYDFHPELGDKTIDLEDDSRFIEFYNLVFMQYNRDADGNLTPLANKNIDTGMGLERMAQILQKVANNYETDLIFPIVAEAARLAAIDYQKADEKTKVSLKVIGDHVRSVVHMIADGISASNTDRGYVLRRLIRRVVRHGRLIGIEGQFITKVAEVAIALSESVYGNVRERETVIKAELEREEARFLETLERGEKLLESILEKEKSQISGVDAFTLYDTYGFPLELTQEIAEEQGLSVDTAGFEQEMKKQQQRSKAAHETIDLTVQGSLDKLAEHIHPTEFLGYTDLQATATVTAVLVAGKTVESAAAGTEVQVVLDRTPFYAESGGQIGDKGYLTGDNLLIRIEDVQKESGIFIHFGRIERGIVTTGDTINAQIDRSCRRRAQANHTATHLLQSALKKLVDGGISQAGSLVSFDRLRFDFNCPRPLTSSELQQVEEQINTWIAEAHDTQIAVMGLEEAKQKGAIAMFGEKYGSEVRVIDIPSVSMELCGGTHVKNTAEIGLFKIISETGIAAGIRRIEAVAGPAVLAYLNERDQVVRALCDRFKVKPLEIPDRITALQSELKGTQKQLEAVKQELALNKSDALLSQAESIGEFKLLVASLGDIDANALMAAAERLQQKLGEGAVILASTPAADKVSLVAAFSPRVIKDKGLQAGKFIGAIAKICAGGGGGRPNLAQAGGRDASKLSEALAKAKSQLTSSLQ</sequence>